<proteinExistence type="evidence at protein level"/>
<name>PRS8_CAEEL</name>
<accession>Q9XTT9</accession>
<sequence length="416" mass="46250">MAPPASTASSADPSKPTAQKLTEESDEKTLRKYFSTKVDDAQQKVADKSQNVRRLQAQRNELNTKVRMLKEELQQLHEQGSYVGEVSKAMDKKKVLVKVHPEGKYVVDVDKSIDINSLNTGARVALRADSYALHKLLPNKVDPLVSLMMVEKVPDSTYEMVGGLDKQIKEIKEVIELPVKHPELFDALGIAQPKGVLLFGPPGTGKTLLARAVAHHTECTFIRVSGSELVQKFIGEGARMVRELFVMAREHAPSIIFMDEIDSIGSSRVEGSSGGDSEVQRTMLELLNQLDGFEATKNIKVIMATNRIDILDPALLRPGRIDRKIEFPAPDEKARADILKIHSRKMNLMRGINMAKIAEQIPGASGAEVKSVCTEAGMFALRERRIHVTQEDFEMAVGKVMQKDSEKNMSIKKLWK</sequence>
<evidence type="ECO:0000250" key="1">
    <source>
        <dbReference type="UniProtKB" id="P62195"/>
    </source>
</evidence>
<evidence type="ECO:0000255" key="2">
    <source>
        <dbReference type="PROSITE-ProRule" id="PRU00499"/>
    </source>
</evidence>
<evidence type="ECO:0000255" key="3">
    <source>
        <dbReference type="RuleBase" id="RU003651"/>
    </source>
</evidence>
<evidence type="ECO:0000256" key="4">
    <source>
        <dbReference type="SAM" id="MobiDB-lite"/>
    </source>
</evidence>
<evidence type="ECO:0000269" key="5">
    <source>
    </source>
</evidence>
<evidence type="ECO:0000305" key="6"/>
<evidence type="ECO:0000305" key="7">
    <source>
    </source>
</evidence>
<evidence type="ECO:0000312" key="8">
    <source>
        <dbReference type="Proteomes" id="UP000001940"/>
    </source>
</evidence>
<evidence type="ECO:0000312" key="9">
    <source>
        <dbReference type="WormBase" id="Y49E10.1"/>
    </source>
</evidence>
<organism evidence="8">
    <name type="scientific">Caenorhabditis elegans</name>
    <dbReference type="NCBI Taxonomy" id="6239"/>
    <lineage>
        <taxon>Eukaryota</taxon>
        <taxon>Metazoa</taxon>
        <taxon>Ecdysozoa</taxon>
        <taxon>Nematoda</taxon>
        <taxon>Chromadorea</taxon>
        <taxon>Rhabditida</taxon>
        <taxon>Rhabditina</taxon>
        <taxon>Rhabditomorpha</taxon>
        <taxon>Rhabditoidea</taxon>
        <taxon>Rhabditidae</taxon>
        <taxon>Peloderinae</taxon>
        <taxon>Caenorhabditis</taxon>
    </lineage>
</organism>
<protein>
    <recommendedName>
        <fullName evidence="1">26S proteasome regulatory subunit 8</fullName>
    </recommendedName>
    <alternativeName>
        <fullName evidence="1">26S proteasome AAA-ATPase subunit rpt-6</fullName>
    </alternativeName>
    <alternativeName>
        <fullName evidence="9">Proteasome regulatory particle ATPase-like protein 6</fullName>
    </alternativeName>
</protein>
<gene>
    <name evidence="9" type="primary">rpt-6</name>
    <name evidence="9" type="ORF">Y49E10.1</name>
</gene>
<dbReference type="EMBL" id="BX284603">
    <property type="protein sequence ID" value="CAB11558.1"/>
    <property type="molecule type" value="Genomic_DNA"/>
</dbReference>
<dbReference type="PIR" id="T27048">
    <property type="entry name" value="T27048"/>
</dbReference>
<dbReference type="RefSeq" id="NP_499609.1">
    <property type="nucleotide sequence ID" value="NM_067208.6"/>
</dbReference>
<dbReference type="SMR" id="Q9XTT9"/>
<dbReference type="DIP" id="DIP-27139N"/>
<dbReference type="FunCoup" id="Q9XTT9">
    <property type="interactions" value="2595"/>
</dbReference>
<dbReference type="IntAct" id="Q9XTT9">
    <property type="interactions" value="4"/>
</dbReference>
<dbReference type="STRING" id="6239.Y49E10.1.1"/>
<dbReference type="PaxDb" id="6239-Y49E10.1"/>
<dbReference type="PeptideAtlas" id="Q9XTT9"/>
<dbReference type="EnsemblMetazoa" id="Y49E10.1.1">
    <property type="protein sequence ID" value="Y49E10.1.1"/>
    <property type="gene ID" value="WBGene00004506"/>
</dbReference>
<dbReference type="GeneID" id="176661"/>
<dbReference type="KEGG" id="cel:CELE_Y49E10.1"/>
<dbReference type="UCSC" id="Y49E10.1">
    <property type="organism name" value="c. elegans"/>
</dbReference>
<dbReference type="AGR" id="WB:WBGene00004506"/>
<dbReference type="CTD" id="176661"/>
<dbReference type="WormBase" id="Y49E10.1">
    <property type="protein sequence ID" value="CE22219"/>
    <property type="gene ID" value="WBGene00004506"/>
    <property type="gene designation" value="rpt-6"/>
</dbReference>
<dbReference type="eggNOG" id="KOG0728">
    <property type="taxonomic scope" value="Eukaryota"/>
</dbReference>
<dbReference type="GeneTree" id="ENSGT01020000230346"/>
<dbReference type="HOGENOM" id="CLU_000688_2_1_1"/>
<dbReference type="InParanoid" id="Q9XTT9"/>
<dbReference type="OMA" id="REPAVIF"/>
<dbReference type="OrthoDB" id="1154031at2759"/>
<dbReference type="PhylomeDB" id="Q9XTT9"/>
<dbReference type="Reactome" id="R-CEL-1234176">
    <property type="pathway name" value="Oxygen-dependent proline hydroxylation of Hypoxia-inducible Factor Alpha"/>
</dbReference>
<dbReference type="Reactome" id="R-CEL-1236978">
    <property type="pathway name" value="Cross-presentation of soluble exogenous antigens (endosomes)"/>
</dbReference>
<dbReference type="Reactome" id="R-CEL-187577">
    <property type="pathway name" value="SCF(Skp2)-mediated degradation of p27/p21"/>
</dbReference>
<dbReference type="Reactome" id="R-CEL-195253">
    <property type="pathway name" value="Degradation of beta-catenin by the destruction complex"/>
</dbReference>
<dbReference type="Reactome" id="R-CEL-349425">
    <property type="pathway name" value="Autodegradation of the E3 ubiquitin ligase COP1"/>
</dbReference>
<dbReference type="Reactome" id="R-CEL-350562">
    <property type="pathway name" value="Regulation of ornithine decarboxylase (ODC)"/>
</dbReference>
<dbReference type="Reactome" id="R-CEL-382556">
    <property type="pathway name" value="ABC-family proteins mediated transport"/>
</dbReference>
<dbReference type="Reactome" id="R-CEL-4608870">
    <property type="pathway name" value="Asymmetric localization of PCP proteins"/>
</dbReference>
<dbReference type="Reactome" id="R-CEL-4641258">
    <property type="pathway name" value="Degradation of DVL"/>
</dbReference>
<dbReference type="Reactome" id="R-CEL-5632684">
    <property type="pathway name" value="Hedgehog 'on' state"/>
</dbReference>
<dbReference type="Reactome" id="R-CEL-5687128">
    <property type="pathway name" value="MAPK6/MAPK4 signaling"/>
</dbReference>
<dbReference type="Reactome" id="R-CEL-5689603">
    <property type="pathway name" value="UCH proteinases"/>
</dbReference>
<dbReference type="Reactome" id="R-CEL-5689880">
    <property type="pathway name" value="Ub-specific processing proteases"/>
</dbReference>
<dbReference type="Reactome" id="R-CEL-68949">
    <property type="pathway name" value="Orc1 removal from chromatin"/>
</dbReference>
<dbReference type="Reactome" id="R-CEL-69017">
    <property type="pathway name" value="CDK-mediated phosphorylation and removal of Cdc6"/>
</dbReference>
<dbReference type="Reactome" id="R-CEL-69601">
    <property type="pathway name" value="Ubiquitin Mediated Degradation of Phosphorylated Cdc25A"/>
</dbReference>
<dbReference type="Reactome" id="R-CEL-75815">
    <property type="pathway name" value="Ubiquitin-dependent degradation of Cyclin D"/>
</dbReference>
<dbReference type="Reactome" id="R-CEL-8854050">
    <property type="pathway name" value="FBXL7 down-regulates AURKA during mitotic entry and in early mitosis"/>
</dbReference>
<dbReference type="Reactome" id="R-CEL-8939902">
    <property type="pathway name" value="Regulation of RUNX2 expression and activity"/>
</dbReference>
<dbReference type="Reactome" id="R-CEL-8941858">
    <property type="pathway name" value="Regulation of RUNX3 expression and activity"/>
</dbReference>
<dbReference type="Reactome" id="R-CEL-8948751">
    <property type="pathway name" value="Regulation of PTEN stability and activity"/>
</dbReference>
<dbReference type="Reactome" id="R-CEL-8951664">
    <property type="pathway name" value="Neddylation"/>
</dbReference>
<dbReference type="Reactome" id="R-CEL-9755511">
    <property type="pathway name" value="KEAP1-NFE2L2 pathway"/>
</dbReference>
<dbReference type="Reactome" id="R-CEL-9762114">
    <property type="pathway name" value="GSK3B and BTRC:CUL1-mediated-degradation of NFE2L2"/>
</dbReference>
<dbReference type="Reactome" id="R-CEL-983168">
    <property type="pathway name" value="Antigen processing: Ubiquitination &amp; Proteasome degradation"/>
</dbReference>
<dbReference type="Reactome" id="R-CEL-9907900">
    <property type="pathway name" value="Proteasome assembly"/>
</dbReference>
<dbReference type="PRO" id="PR:Q9XTT9"/>
<dbReference type="Proteomes" id="UP000001940">
    <property type="component" value="Chromosome III"/>
</dbReference>
<dbReference type="Bgee" id="WBGene00004506">
    <property type="expression patterns" value="Expressed in adult organism and 4 other cell types or tissues"/>
</dbReference>
<dbReference type="GO" id="GO:0005737">
    <property type="term" value="C:cytoplasm"/>
    <property type="evidence" value="ECO:0007669"/>
    <property type="project" value="UniProtKB-SubCell"/>
</dbReference>
<dbReference type="GO" id="GO:0005634">
    <property type="term" value="C:nucleus"/>
    <property type="evidence" value="ECO:0007669"/>
    <property type="project" value="UniProtKB-SubCell"/>
</dbReference>
<dbReference type="GO" id="GO:0008540">
    <property type="term" value="C:proteasome regulatory particle, base subcomplex"/>
    <property type="evidence" value="ECO:0000318"/>
    <property type="project" value="GO_Central"/>
</dbReference>
<dbReference type="GO" id="GO:0005524">
    <property type="term" value="F:ATP binding"/>
    <property type="evidence" value="ECO:0007669"/>
    <property type="project" value="UniProtKB-KW"/>
</dbReference>
<dbReference type="GO" id="GO:0016887">
    <property type="term" value="F:ATP hydrolysis activity"/>
    <property type="evidence" value="ECO:0007669"/>
    <property type="project" value="InterPro"/>
</dbReference>
<dbReference type="GO" id="GO:0036402">
    <property type="term" value="F:proteasome-activating activity"/>
    <property type="evidence" value="ECO:0000318"/>
    <property type="project" value="GO_Central"/>
</dbReference>
<dbReference type="GO" id="GO:0043161">
    <property type="term" value="P:proteasome-mediated ubiquitin-dependent protein catabolic process"/>
    <property type="evidence" value="ECO:0000318"/>
    <property type="project" value="GO_Central"/>
</dbReference>
<dbReference type="CDD" id="cd19502">
    <property type="entry name" value="RecA-like_PAN_like"/>
    <property type="match status" value="1"/>
</dbReference>
<dbReference type="FunFam" id="1.10.8.60:FF:000006">
    <property type="entry name" value="26S protease regulatory subunit 8"/>
    <property type="match status" value="1"/>
</dbReference>
<dbReference type="FunFam" id="2.40.50.140:FF:000044">
    <property type="entry name" value="26S protease regulatory subunit 8"/>
    <property type="match status" value="1"/>
</dbReference>
<dbReference type="FunFam" id="3.40.50.300:FF:000030">
    <property type="entry name" value="26S protease regulatory subunit 8"/>
    <property type="match status" value="1"/>
</dbReference>
<dbReference type="Gene3D" id="1.10.8.60">
    <property type="match status" value="1"/>
</dbReference>
<dbReference type="Gene3D" id="2.40.50.140">
    <property type="entry name" value="Nucleic acid-binding proteins"/>
    <property type="match status" value="1"/>
</dbReference>
<dbReference type="Gene3D" id="3.40.50.300">
    <property type="entry name" value="P-loop containing nucleotide triphosphate hydrolases"/>
    <property type="match status" value="1"/>
</dbReference>
<dbReference type="InterPro" id="IPR050221">
    <property type="entry name" value="26S_Proteasome_ATPase"/>
</dbReference>
<dbReference type="InterPro" id="IPR003593">
    <property type="entry name" value="AAA+_ATPase"/>
</dbReference>
<dbReference type="InterPro" id="IPR041569">
    <property type="entry name" value="AAA_lid_3"/>
</dbReference>
<dbReference type="InterPro" id="IPR003959">
    <property type="entry name" value="ATPase_AAA_core"/>
</dbReference>
<dbReference type="InterPro" id="IPR003960">
    <property type="entry name" value="ATPase_AAA_CS"/>
</dbReference>
<dbReference type="InterPro" id="IPR012340">
    <property type="entry name" value="NA-bd_OB-fold"/>
</dbReference>
<dbReference type="InterPro" id="IPR027417">
    <property type="entry name" value="P-loop_NTPase"/>
</dbReference>
<dbReference type="InterPro" id="IPR032501">
    <property type="entry name" value="Prot_ATP_ID_OB_2nd"/>
</dbReference>
<dbReference type="PANTHER" id="PTHR23073">
    <property type="entry name" value="26S PROTEASOME REGULATORY SUBUNIT"/>
    <property type="match status" value="1"/>
</dbReference>
<dbReference type="Pfam" id="PF00004">
    <property type="entry name" value="AAA"/>
    <property type="match status" value="1"/>
</dbReference>
<dbReference type="Pfam" id="PF17862">
    <property type="entry name" value="AAA_lid_3"/>
    <property type="match status" value="1"/>
</dbReference>
<dbReference type="Pfam" id="PF16450">
    <property type="entry name" value="Prot_ATP_ID_OB_C"/>
    <property type="match status" value="1"/>
</dbReference>
<dbReference type="SMART" id="SM00382">
    <property type="entry name" value="AAA"/>
    <property type="match status" value="1"/>
</dbReference>
<dbReference type="SUPFAM" id="SSF52540">
    <property type="entry name" value="P-loop containing nucleoside triphosphate hydrolases"/>
    <property type="match status" value="1"/>
</dbReference>
<dbReference type="PROSITE" id="PS00674">
    <property type="entry name" value="AAA"/>
    <property type="match status" value="1"/>
</dbReference>
<keyword id="KW-0067">ATP-binding</keyword>
<keyword id="KW-0963">Cytoplasm</keyword>
<keyword id="KW-0547">Nucleotide-binding</keyword>
<keyword id="KW-0539">Nucleus</keyword>
<keyword id="KW-0647">Proteasome</keyword>
<keyword id="KW-1185">Reference proteome</keyword>
<keyword id="KW-0804">Transcription</keyword>
<keyword id="KW-0805">Transcription regulation</keyword>
<comment type="function">
    <text evidence="1 5">Component of the 26S proteasome, a multiprotein complex involved in the ATP-dependent degradation of ubiquitinated proteins (PubMed:30265660). This complex plays a key role in the maintenance of protein homeostasis by removing misfolded or damaged proteins, which could impair cellular functions, and by removing proteins whose functions are no longer required (PubMed:30265660). Therefore, the proteasome participates in numerous cellular processes, including cell cycle progression, apoptosis, or DNA damage repair (By similarity). Belongs to the heterohexameric ring of AAA (ATPases associated with diverse cellular activities) proteins that unfolds ubiquitinated target proteins that are concurrently translocated into a proteolytic chamber and degraded into peptides (By similarity). In addition, regulates gene expression in response to bacterial infection (PubMed:30265660). Binds to the GATA transcription factor elt-2 to control its transcriptional activity and thus the expression of elt-2-dependent genes in response to infection by Gram-negative bacteria such as P.aeruginosa (PubMed:30265660).</text>
</comment>
<comment type="subunit">
    <text evidence="1 5 7">Component of the 19S proteasome regulatory particle complex (Probable). The 26S proteasome consists of a 20S core particle (CP) and two 19S regulatory subunits (RP) (By similarity). Interacts with elt-2 (PubMed:30265660).</text>
</comment>
<comment type="subcellular location">
    <subcellularLocation>
        <location evidence="6">Cytoplasm</location>
    </subcellularLocation>
    <subcellularLocation>
        <location evidence="7">Nucleus</location>
    </subcellularLocation>
</comment>
<comment type="disruption phenotype">
    <text evidence="5">RNAi-mediated knockdown at the L4 stage of larval development inhibits activity of the proteasome (PubMed:30265660). RNAi-mediated knockdown at the L4 larval stage also results in increased mortality and transcription of immune genes containing the elt-2 binding motif when exposed to Gram-negative bacteria such as P.aeruginosa (PubMed:30265660). RNAi-mediated knockdown at this stage, furthermore, prevents the recovery of P.aeruginosa infected animals treated with the antibiotic streptomycin (PubMed:30265660).</text>
</comment>
<comment type="similarity">
    <text evidence="3">Belongs to the AAA ATPase family.</text>
</comment>
<feature type="chain" id="PRO_0000447609" description="26S proteasome regulatory subunit 8">
    <location>
        <begin position="1"/>
        <end position="416"/>
    </location>
</feature>
<feature type="region of interest" description="Disordered" evidence="4">
    <location>
        <begin position="1"/>
        <end position="29"/>
    </location>
</feature>
<feature type="compositionally biased region" description="Low complexity" evidence="4">
    <location>
        <begin position="1"/>
        <end position="18"/>
    </location>
</feature>
<feature type="binding site" evidence="2">
    <location>
        <begin position="200"/>
        <end position="207"/>
    </location>
    <ligand>
        <name>ATP</name>
        <dbReference type="ChEBI" id="CHEBI:30616"/>
    </ligand>
</feature>
<feature type="site" description="Mediates interaction with elt-2" evidence="7">
    <location>
        <position position="206"/>
    </location>
</feature>
<feature type="mutagenesis site" description="Impaired interaction with elt-2." evidence="5">
    <original>K</original>
    <variation>R</variation>
    <location>
        <position position="206"/>
    </location>
</feature>
<reference evidence="8" key="1">
    <citation type="journal article" date="1998" name="Science">
        <title>Genome sequence of the nematode C. elegans: a platform for investigating biology.</title>
        <authorList>
            <consortium name="The C. elegans sequencing consortium"/>
        </authorList>
    </citation>
    <scope>NUCLEOTIDE SEQUENCE [LARGE SCALE GENOMIC DNA]</scope>
    <source>
        <strain evidence="8">Bristol N2</strain>
    </source>
</reference>
<reference evidence="6" key="2">
    <citation type="journal article" date="2018" name="PLoS Genet.">
        <title>Non-proteolytic activity of 19S proteasome subunit RPT-6 regulates GATA transcription during response to infection.</title>
        <authorList>
            <person name="Olaitan A.O."/>
            <person name="Aballay A."/>
        </authorList>
    </citation>
    <scope>IDENTIFICATION BY MASS SPECTROMETRY</scope>
    <scope>FUNCTION</scope>
    <scope>INTERACTION WITH ELT-2</scope>
    <scope>SUBCELLULAR LOCATION</scope>
    <scope>DISRUPTION PHENOTYPE</scope>
    <scope>MUTAGENESIS OF LYS-206</scope>
</reference>